<reference key="1">
    <citation type="journal article" date="2006" name="Nat. Genet.">
        <title>The multidrug-resistant human pathogen Clostridium difficile has a highly mobile, mosaic genome.</title>
        <authorList>
            <person name="Sebaihia M."/>
            <person name="Wren B.W."/>
            <person name="Mullany P."/>
            <person name="Fairweather N.F."/>
            <person name="Minton N."/>
            <person name="Stabler R."/>
            <person name="Thomson N.R."/>
            <person name="Roberts A.P."/>
            <person name="Cerdeno-Tarraga A.M."/>
            <person name="Wang H."/>
            <person name="Holden M.T.G."/>
            <person name="Wright A."/>
            <person name="Churcher C."/>
            <person name="Quail M.A."/>
            <person name="Baker S."/>
            <person name="Bason N."/>
            <person name="Brooks K."/>
            <person name="Chillingworth T."/>
            <person name="Cronin A."/>
            <person name="Davis P."/>
            <person name="Dowd L."/>
            <person name="Fraser A."/>
            <person name="Feltwell T."/>
            <person name="Hance Z."/>
            <person name="Holroyd S."/>
            <person name="Jagels K."/>
            <person name="Moule S."/>
            <person name="Mungall K."/>
            <person name="Price C."/>
            <person name="Rabbinowitsch E."/>
            <person name="Sharp S."/>
            <person name="Simmonds M."/>
            <person name="Stevens K."/>
            <person name="Unwin L."/>
            <person name="Whithead S."/>
            <person name="Dupuy B."/>
            <person name="Dougan G."/>
            <person name="Barrell B."/>
            <person name="Parkhill J."/>
        </authorList>
    </citation>
    <scope>NUCLEOTIDE SEQUENCE [LARGE SCALE GENOMIC DNA]</scope>
    <source>
        <strain>630</strain>
    </source>
</reference>
<keyword id="KW-0029">Amino-acid transport</keyword>
<keyword id="KW-0067">ATP-binding</keyword>
<keyword id="KW-1003">Cell membrane</keyword>
<keyword id="KW-0472">Membrane</keyword>
<keyword id="KW-0547">Nucleotide-binding</keyword>
<keyword id="KW-1185">Reference proteome</keyword>
<keyword id="KW-1278">Translocase</keyword>
<keyword id="KW-0813">Transport</keyword>
<comment type="function">
    <text evidence="1">Part of the ABC transporter complex MetNIQ involved in methionine import. Responsible for energy coupling to the transport system.</text>
</comment>
<comment type="catalytic activity">
    <reaction evidence="1">
        <text>L-methionine(out) + ATP + H2O = L-methionine(in) + ADP + phosphate + H(+)</text>
        <dbReference type="Rhea" id="RHEA:29779"/>
        <dbReference type="ChEBI" id="CHEBI:15377"/>
        <dbReference type="ChEBI" id="CHEBI:15378"/>
        <dbReference type="ChEBI" id="CHEBI:30616"/>
        <dbReference type="ChEBI" id="CHEBI:43474"/>
        <dbReference type="ChEBI" id="CHEBI:57844"/>
        <dbReference type="ChEBI" id="CHEBI:456216"/>
        <dbReference type="EC" id="7.4.2.11"/>
    </reaction>
</comment>
<comment type="catalytic activity">
    <reaction evidence="1">
        <text>D-methionine(out) + ATP + H2O = D-methionine(in) + ADP + phosphate + H(+)</text>
        <dbReference type="Rhea" id="RHEA:29767"/>
        <dbReference type="ChEBI" id="CHEBI:15377"/>
        <dbReference type="ChEBI" id="CHEBI:15378"/>
        <dbReference type="ChEBI" id="CHEBI:30616"/>
        <dbReference type="ChEBI" id="CHEBI:43474"/>
        <dbReference type="ChEBI" id="CHEBI:57932"/>
        <dbReference type="ChEBI" id="CHEBI:456216"/>
        <dbReference type="EC" id="7.4.2.11"/>
    </reaction>
</comment>
<comment type="subunit">
    <text evidence="1">The complex is composed of two ATP-binding proteins (MetN), two transmembrane proteins (MetI) and a solute-binding protein (MetQ).</text>
</comment>
<comment type="subcellular location">
    <subcellularLocation>
        <location evidence="1">Cell membrane</location>
        <topology evidence="1">Peripheral membrane protein</topology>
    </subcellularLocation>
</comment>
<comment type="similarity">
    <text evidence="1">Belongs to the ABC transporter superfamily. Methionine importer (TC 3.A.1.24) family.</text>
</comment>
<feature type="chain" id="PRO_0000270284" description="Methionine import ATP-binding protein MetN">
    <location>
        <begin position="1"/>
        <end position="321"/>
    </location>
</feature>
<feature type="domain" description="ABC transporter" evidence="1">
    <location>
        <begin position="2"/>
        <end position="237"/>
    </location>
</feature>
<feature type="binding site" evidence="1">
    <location>
        <begin position="34"/>
        <end position="41"/>
    </location>
    <ligand>
        <name>ATP</name>
        <dbReference type="ChEBI" id="CHEBI:30616"/>
    </ligand>
</feature>
<sequence>MISIKNVNKYYGKIQVLKDVSIEIESGEIFGIIGHSGAGKSTLLRCINGLEEYQEGSVLVSDKEVKSLNEKQMRDLRKELGMIFQHFSLLERKTVFDNVALPLECFGYSKAEIKKRVLELLEVVGISEKKNDKPRNLSGGQKQRVAIARALALNPQVLLCDEATSALDPNTTKSILSLLEDINKKLGITIIVVTHQMEVIKQICGRVAIMENGEVLEVGDTEEIFLRNTKGLRKLIGEESIILPKGTNIKILFPKDISNEAIITTMARELNIDVSIIFGKLEQFKDDILGSLIINISDKSGEQVKQYLTSKGIRWEEMINE</sequence>
<organism>
    <name type="scientific">Clostridioides difficile (strain 630)</name>
    <name type="common">Peptoclostridium difficile</name>
    <dbReference type="NCBI Taxonomy" id="272563"/>
    <lineage>
        <taxon>Bacteria</taxon>
        <taxon>Bacillati</taxon>
        <taxon>Bacillota</taxon>
        <taxon>Clostridia</taxon>
        <taxon>Peptostreptococcales</taxon>
        <taxon>Peptostreptococcaceae</taxon>
        <taxon>Clostridioides</taxon>
    </lineage>
</organism>
<dbReference type="EC" id="7.4.2.11" evidence="1"/>
<dbReference type="EMBL" id="AM180355">
    <property type="protein sequence ID" value="CAJ68354.1"/>
    <property type="molecule type" value="Genomic_DNA"/>
</dbReference>
<dbReference type="RefSeq" id="WP_009896423.1">
    <property type="nucleotide sequence ID" value="NZ_JAUPES010000037.1"/>
</dbReference>
<dbReference type="RefSeq" id="YP_001087990.1">
    <property type="nucleotide sequence ID" value="NC_009089.1"/>
</dbReference>
<dbReference type="SMR" id="Q18C09"/>
<dbReference type="STRING" id="272563.CD630_14890"/>
<dbReference type="EnsemblBacteria" id="CAJ68354">
    <property type="protein sequence ID" value="CAJ68354"/>
    <property type="gene ID" value="CD630_14890"/>
</dbReference>
<dbReference type="KEGG" id="cdf:CD630_14890"/>
<dbReference type="KEGG" id="pdc:CDIF630_01654"/>
<dbReference type="PATRIC" id="fig|272563.120.peg.1558"/>
<dbReference type="eggNOG" id="COG1135">
    <property type="taxonomic scope" value="Bacteria"/>
</dbReference>
<dbReference type="OrthoDB" id="9804199at2"/>
<dbReference type="PhylomeDB" id="Q18C09"/>
<dbReference type="BioCyc" id="PDIF272563:G12WB-1626-MONOMER"/>
<dbReference type="Proteomes" id="UP000001978">
    <property type="component" value="Chromosome"/>
</dbReference>
<dbReference type="GO" id="GO:0005886">
    <property type="term" value="C:plasma membrane"/>
    <property type="evidence" value="ECO:0007669"/>
    <property type="project" value="UniProtKB-SubCell"/>
</dbReference>
<dbReference type="GO" id="GO:0033232">
    <property type="term" value="F:ABC-type D-methionine transporter activity"/>
    <property type="evidence" value="ECO:0007669"/>
    <property type="project" value="UniProtKB-EC"/>
</dbReference>
<dbReference type="GO" id="GO:0005524">
    <property type="term" value="F:ATP binding"/>
    <property type="evidence" value="ECO:0007669"/>
    <property type="project" value="UniProtKB-KW"/>
</dbReference>
<dbReference type="GO" id="GO:0016887">
    <property type="term" value="F:ATP hydrolysis activity"/>
    <property type="evidence" value="ECO:0007669"/>
    <property type="project" value="InterPro"/>
</dbReference>
<dbReference type="CDD" id="cd03258">
    <property type="entry name" value="ABC_MetN_methionine_transporter"/>
    <property type="match status" value="1"/>
</dbReference>
<dbReference type="FunFam" id="3.40.50.300:FF:000056">
    <property type="entry name" value="Cell division ATP-binding protein FtsE"/>
    <property type="match status" value="1"/>
</dbReference>
<dbReference type="Gene3D" id="3.30.70.260">
    <property type="match status" value="1"/>
</dbReference>
<dbReference type="Gene3D" id="3.40.50.300">
    <property type="entry name" value="P-loop containing nucleotide triphosphate hydrolases"/>
    <property type="match status" value="1"/>
</dbReference>
<dbReference type="InterPro" id="IPR003593">
    <property type="entry name" value="AAA+_ATPase"/>
</dbReference>
<dbReference type="InterPro" id="IPR003439">
    <property type="entry name" value="ABC_transporter-like_ATP-bd"/>
</dbReference>
<dbReference type="InterPro" id="IPR017871">
    <property type="entry name" value="ABC_transporter-like_CS"/>
</dbReference>
<dbReference type="InterPro" id="IPR045865">
    <property type="entry name" value="ACT-like_dom_sf"/>
</dbReference>
<dbReference type="InterPro" id="IPR041701">
    <property type="entry name" value="MetN_ABC"/>
</dbReference>
<dbReference type="InterPro" id="IPR050086">
    <property type="entry name" value="MetN_ABC_transporter-like"/>
</dbReference>
<dbReference type="InterPro" id="IPR018449">
    <property type="entry name" value="NIL_domain"/>
</dbReference>
<dbReference type="InterPro" id="IPR027417">
    <property type="entry name" value="P-loop_NTPase"/>
</dbReference>
<dbReference type="PANTHER" id="PTHR43166">
    <property type="entry name" value="AMINO ACID IMPORT ATP-BINDING PROTEIN"/>
    <property type="match status" value="1"/>
</dbReference>
<dbReference type="PANTHER" id="PTHR43166:SF30">
    <property type="entry name" value="METHIONINE IMPORT ATP-BINDING PROTEIN METN"/>
    <property type="match status" value="1"/>
</dbReference>
<dbReference type="Pfam" id="PF00005">
    <property type="entry name" value="ABC_tran"/>
    <property type="match status" value="1"/>
</dbReference>
<dbReference type="Pfam" id="PF09383">
    <property type="entry name" value="NIL"/>
    <property type="match status" value="1"/>
</dbReference>
<dbReference type="SMART" id="SM00382">
    <property type="entry name" value="AAA"/>
    <property type="match status" value="1"/>
</dbReference>
<dbReference type="SMART" id="SM00930">
    <property type="entry name" value="NIL"/>
    <property type="match status" value="1"/>
</dbReference>
<dbReference type="SUPFAM" id="SSF55021">
    <property type="entry name" value="ACT-like"/>
    <property type="match status" value="1"/>
</dbReference>
<dbReference type="SUPFAM" id="SSF52540">
    <property type="entry name" value="P-loop containing nucleoside triphosphate hydrolases"/>
    <property type="match status" value="1"/>
</dbReference>
<dbReference type="PROSITE" id="PS00211">
    <property type="entry name" value="ABC_TRANSPORTER_1"/>
    <property type="match status" value="1"/>
</dbReference>
<dbReference type="PROSITE" id="PS50893">
    <property type="entry name" value="ABC_TRANSPORTER_2"/>
    <property type="match status" value="1"/>
</dbReference>
<dbReference type="PROSITE" id="PS51264">
    <property type="entry name" value="METN"/>
    <property type="match status" value="1"/>
</dbReference>
<accession>Q18C09</accession>
<evidence type="ECO:0000255" key="1">
    <source>
        <dbReference type="HAMAP-Rule" id="MF_01719"/>
    </source>
</evidence>
<protein>
    <recommendedName>
        <fullName evidence="1">Methionine import ATP-binding protein MetN</fullName>
        <ecNumber evidence="1">7.4.2.11</ecNumber>
    </recommendedName>
</protein>
<name>METN_CLOD6</name>
<gene>
    <name evidence="1" type="primary">metN</name>
    <name type="ordered locus">CD630_14890</name>
</gene>
<proteinExistence type="inferred from homology"/>